<comment type="function">
    <text evidence="1">Forms an efflux pump with AaeB.</text>
</comment>
<comment type="subcellular location">
    <subcellularLocation>
        <location evidence="1">Cell inner membrane</location>
        <topology evidence="1">Single-pass membrane protein</topology>
    </subcellularLocation>
</comment>
<comment type="similarity">
    <text evidence="1">Belongs to the membrane fusion protein (MFP) (TC 8.A.1) family.</text>
</comment>
<proteinExistence type="inferred from homology"/>
<protein>
    <recommendedName>
        <fullName evidence="1">p-hydroxybenzoic acid efflux pump subunit AaeA</fullName>
        <shortName evidence="1">pHBA efflux pump protein A</shortName>
    </recommendedName>
</protein>
<evidence type="ECO:0000255" key="1">
    <source>
        <dbReference type="HAMAP-Rule" id="MF_01544"/>
    </source>
</evidence>
<accession>Q6DAH5</accession>
<keyword id="KW-0997">Cell inner membrane</keyword>
<keyword id="KW-1003">Cell membrane</keyword>
<keyword id="KW-0472">Membrane</keyword>
<keyword id="KW-1185">Reference proteome</keyword>
<keyword id="KW-0812">Transmembrane</keyword>
<keyword id="KW-1133">Transmembrane helix</keyword>
<keyword id="KW-0813">Transport</keyword>
<name>AAEA_PECAS</name>
<gene>
    <name evidence="1" type="primary">aaeA</name>
    <name type="ordered locus">ECA0278</name>
</gene>
<organism>
    <name type="scientific">Pectobacterium atrosepticum (strain SCRI 1043 / ATCC BAA-672)</name>
    <name type="common">Erwinia carotovora subsp. atroseptica</name>
    <dbReference type="NCBI Taxonomy" id="218491"/>
    <lineage>
        <taxon>Bacteria</taxon>
        <taxon>Pseudomonadati</taxon>
        <taxon>Pseudomonadota</taxon>
        <taxon>Gammaproteobacteria</taxon>
        <taxon>Enterobacterales</taxon>
        <taxon>Pectobacteriaceae</taxon>
        <taxon>Pectobacterium</taxon>
    </lineage>
</organism>
<reference key="1">
    <citation type="journal article" date="2004" name="Proc. Natl. Acad. Sci. U.S.A.">
        <title>Genome sequence of the enterobacterial phytopathogen Erwinia carotovora subsp. atroseptica and characterization of virulence factors.</title>
        <authorList>
            <person name="Bell K.S."/>
            <person name="Sebaihia M."/>
            <person name="Pritchard L."/>
            <person name="Holden M.T.G."/>
            <person name="Hyman L.J."/>
            <person name="Holeva M.C."/>
            <person name="Thomson N.R."/>
            <person name="Bentley S.D."/>
            <person name="Churcher L.J.C."/>
            <person name="Mungall K."/>
            <person name="Atkin R."/>
            <person name="Bason N."/>
            <person name="Brooks K."/>
            <person name="Chillingworth T."/>
            <person name="Clark K."/>
            <person name="Doggett J."/>
            <person name="Fraser A."/>
            <person name="Hance Z."/>
            <person name="Hauser H."/>
            <person name="Jagels K."/>
            <person name="Moule S."/>
            <person name="Norbertczak H."/>
            <person name="Ormond D."/>
            <person name="Price C."/>
            <person name="Quail M.A."/>
            <person name="Sanders M."/>
            <person name="Walker D."/>
            <person name="Whitehead S."/>
            <person name="Salmond G.P.C."/>
            <person name="Birch P.R.J."/>
            <person name="Parkhill J."/>
            <person name="Toth I.K."/>
        </authorList>
    </citation>
    <scope>NUCLEOTIDE SEQUENCE [LARGE SCALE GENOMIC DNA]</scope>
    <source>
        <strain>SCRI 1043 / ATCC BAA-672</strain>
    </source>
</reference>
<sequence length="321" mass="35624">MKSFFLTLFRQQAALTKKLSRVVITLVIVLCAIVAIFRVWAFYTESPWTRDAKFTADVVAIAPDVSGLLTDVRVTDNQLVNKGDVLFVIDQPRYHQAVAQAEADVAYYQALVTEKRRESGRRARLGVSAMSQENIDQSNNALETATHQLAKAQAVMSLAKLELDRTVVRAPADGWVTNLHVQSGEFIERGNTAVALVKKDSFYLLAYMEETKLEGVRRGYRAEITPLGSEKIFYGTVDSVAAGINNSSNSANTKGLANVDSNLEWVRLAQRVPVKIRLDRQMGDLYPAGTTATVVVTGEQVNNDKKPSPLIRLLYRLREFG</sequence>
<feature type="chain" id="PRO_0000201849" description="p-hydroxybenzoic acid efflux pump subunit AaeA">
    <location>
        <begin position="1"/>
        <end position="321"/>
    </location>
</feature>
<feature type="transmembrane region" description="Helical" evidence="1">
    <location>
        <begin position="22"/>
        <end position="42"/>
    </location>
</feature>
<dbReference type="EMBL" id="BX950851">
    <property type="protein sequence ID" value="CAG73198.1"/>
    <property type="molecule type" value="Genomic_DNA"/>
</dbReference>
<dbReference type="RefSeq" id="WP_011091912.1">
    <property type="nucleotide sequence ID" value="NC_004547.2"/>
</dbReference>
<dbReference type="SMR" id="Q6DAH5"/>
<dbReference type="STRING" id="218491.ECA0278"/>
<dbReference type="GeneID" id="57207151"/>
<dbReference type="KEGG" id="eca:ECA0278"/>
<dbReference type="PATRIC" id="fig|218491.5.peg.280"/>
<dbReference type="eggNOG" id="COG1566">
    <property type="taxonomic scope" value="Bacteria"/>
</dbReference>
<dbReference type="HOGENOM" id="CLU_018816_15_2_6"/>
<dbReference type="OrthoDB" id="9811754at2"/>
<dbReference type="Proteomes" id="UP000007966">
    <property type="component" value="Chromosome"/>
</dbReference>
<dbReference type="GO" id="GO:0005886">
    <property type="term" value="C:plasma membrane"/>
    <property type="evidence" value="ECO:0007669"/>
    <property type="project" value="UniProtKB-SubCell"/>
</dbReference>
<dbReference type="GO" id="GO:0022857">
    <property type="term" value="F:transmembrane transporter activity"/>
    <property type="evidence" value="ECO:0007669"/>
    <property type="project" value="UniProtKB-UniRule"/>
</dbReference>
<dbReference type="Gene3D" id="2.40.30.170">
    <property type="match status" value="1"/>
</dbReference>
<dbReference type="Gene3D" id="2.40.50.100">
    <property type="match status" value="1"/>
</dbReference>
<dbReference type="Gene3D" id="1.10.287.470">
    <property type="entry name" value="Helix hairpin bin"/>
    <property type="match status" value="1"/>
</dbReference>
<dbReference type="HAMAP" id="MF_01544">
    <property type="entry name" value="AaeA"/>
    <property type="match status" value="1"/>
</dbReference>
<dbReference type="InterPro" id="IPR043602">
    <property type="entry name" value="CusB-like_dom_1"/>
</dbReference>
<dbReference type="InterPro" id="IPR032317">
    <property type="entry name" value="CusB_D23"/>
</dbReference>
<dbReference type="InterPro" id="IPR050393">
    <property type="entry name" value="MFP_Efflux_Pump"/>
</dbReference>
<dbReference type="InterPro" id="IPR022871">
    <property type="entry name" value="PHBA_efflux_pump_AaeA"/>
</dbReference>
<dbReference type="InterPro" id="IPR006143">
    <property type="entry name" value="RND_pump_MFP"/>
</dbReference>
<dbReference type="NCBIfam" id="NF007850">
    <property type="entry name" value="PRK10559.1"/>
    <property type="match status" value="1"/>
</dbReference>
<dbReference type="NCBIfam" id="TIGR01730">
    <property type="entry name" value="RND_mfp"/>
    <property type="match status" value="1"/>
</dbReference>
<dbReference type="PANTHER" id="PTHR30367:SF12">
    <property type="entry name" value="P-HYDROXYBENZOIC ACID EFFLUX PUMP SUBUNIT AAEA"/>
    <property type="match status" value="1"/>
</dbReference>
<dbReference type="PANTHER" id="PTHR30367">
    <property type="entry name" value="P-HYDROXYBENZOIC ACID EFFLUX PUMP SUBUNIT AAEA-RELATED"/>
    <property type="match status" value="1"/>
</dbReference>
<dbReference type="Pfam" id="PF00529">
    <property type="entry name" value="CusB_dom_1"/>
    <property type="match status" value="1"/>
</dbReference>
<dbReference type="Pfam" id="PF16576">
    <property type="entry name" value="HlyD_D23"/>
    <property type="match status" value="1"/>
</dbReference>
<dbReference type="SUPFAM" id="SSF111369">
    <property type="entry name" value="HlyD-like secretion proteins"/>
    <property type="match status" value="1"/>
</dbReference>